<gene>
    <name evidence="1" type="primary">rps17e</name>
    <name type="ordered locus">PF1491</name>
</gene>
<sequence length="67" mass="7924">MGKIRQGFIKRVARELVNKYPNEFTTDFEHNKKKVQELTNVTSKKIRNRIAGYVTKLVRMKMEGKIL</sequence>
<keyword id="KW-0002">3D-structure</keyword>
<keyword id="KW-1185">Reference proteome</keyword>
<keyword id="KW-0687">Ribonucleoprotein</keyword>
<keyword id="KW-0689">Ribosomal protein</keyword>
<organism>
    <name type="scientific">Pyrococcus furiosus (strain ATCC 43587 / DSM 3638 / JCM 8422 / Vc1)</name>
    <dbReference type="NCBI Taxonomy" id="186497"/>
    <lineage>
        <taxon>Archaea</taxon>
        <taxon>Methanobacteriati</taxon>
        <taxon>Methanobacteriota</taxon>
        <taxon>Thermococci</taxon>
        <taxon>Thermococcales</taxon>
        <taxon>Thermococcaceae</taxon>
        <taxon>Pyrococcus</taxon>
    </lineage>
</organism>
<dbReference type="EMBL" id="AE009950">
    <property type="protein sequence ID" value="AAL81615.1"/>
    <property type="molecule type" value="Genomic_DNA"/>
</dbReference>
<dbReference type="RefSeq" id="WP_011012638.1">
    <property type="nucleotide sequence ID" value="NZ_CP023154.1"/>
</dbReference>
<dbReference type="PDB" id="4V4N">
    <property type="method" value="EM"/>
    <property type="resolution" value="9.00 A"/>
    <property type="chains" value="S=1-67"/>
</dbReference>
<dbReference type="PDB" id="4V6U">
    <property type="method" value="EM"/>
    <property type="resolution" value="6.60 A"/>
    <property type="chains" value="AS=1-67"/>
</dbReference>
<dbReference type="PDB" id="5JB3">
    <property type="method" value="EM"/>
    <property type="resolution" value="5.34 A"/>
    <property type="chains" value="S=1-67"/>
</dbReference>
<dbReference type="PDB" id="5JBH">
    <property type="method" value="EM"/>
    <property type="resolution" value="5.34 A"/>
    <property type="chains" value="S=1-67"/>
</dbReference>
<dbReference type="PDBsum" id="4V4N"/>
<dbReference type="PDBsum" id="4V6U"/>
<dbReference type="PDBsum" id="5JB3"/>
<dbReference type="PDBsum" id="5JBH"/>
<dbReference type="EMDB" id="EMD-50611"/>
<dbReference type="EMDB" id="EMD-50612"/>
<dbReference type="EMDB" id="EMD-50613"/>
<dbReference type="EMDB" id="EMD-8149"/>
<dbReference type="SMR" id="Q8U0U1"/>
<dbReference type="STRING" id="186497.PF1491"/>
<dbReference type="PaxDb" id="186497-PF1491"/>
<dbReference type="KEGG" id="pfu:PF1491"/>
<dbReference type="PATRIC" id="fig|186497.12.peg.1554"/>
<dbReference type="eggNOG" id="arCOG01885">
    <property type="taxonomic scope" value="Archaea"/>
</dbReference>
<dbReference type="HOGENOM" id="CLU_176720_1_0_2"/>
<dbReference type="OrthoDB" id="52479at2157"/>
<dbReference type="PhylomeDB" id="Q8U0U1"/>
<dbReference type="Proteomes" id="UP000001013">
    <property type="component" value="Chromosome"/>
</dbReference>
<dbReference type="GO" id="GO:0005829">
    <property type="term" value="C:cytosol"/>
    <property type="evidence" value="ECO:0007669"/>
    <property type="project" value="UniProtKB-ARBA"/>
</dbReference>
<dbReference type="GO" id="GO:1990904">
    <property type="term" value="C:ribonucleoprotein complex"/>
    <property type="evidence" value="ECO:0007669"/>
    <property type="project" value="UniProtKB-KW"/>
</dbReference>
<dbReference type="GO" id="GO:0005840">
    <property type="term" value="C:ribosome"/>
    <property type="evidence" value="ECO:0007669"/>
    <property type="project" value="UniProtKB-KW"/>
</dbReference>
<dbReference type="GO" id="GO:0003735">
    <property type="term" value="F:structural constituent of ribosome"/>
    <property type="evidence" value="ECO:0007669"/>
    <property type="project" value="InterPro"/>
</dbReference>
<dbReference type="GO" id="GO:0006412">
    <property type="term" value="P:translation"/>
    <property type="evidence" value="ECO:0007669"/>
    <property type="project" value="UniProtKB-UniRule"/>
</dbReference>
<dbReference type="Gene3D" id="1.10.60.20">
    <property type="entry name" value="Ribosomal protein S17e-like"/>
    <property type="match status" value="1"/>
</dbReference>
<dbReference type="HAMAP" id="MF_00511">
    <property type="entry name" value="Ribosomal_eS17"/>
    <property type="match status" value="1"/>
</dbReference>
<dbReference type="InterPro" id="IPR001210">
    <property type="entry name" value="Ribosomal_eS17"/>
</dbReference>
<dbReference type="InterPro" id="IPR018273">
    <property type="entry name" value="Ribosomal_eS17_CS"/>
</dbReference>
<dbReference type="InterPro" id="IPR036401">
    <property type="entry name" value="Ribosomal_eS17_sf"/>
</dbReference>
<dbReference type="NCBIfam" id="NF002242">
    <property type="entry name" value="PRK01151.1"/>
    <property type="match status" value="1"/>
</dbReference>
<dbReference type="PANTHER" id="PTHR10732">
    <property type="entry name" value="40S RIBOSOMAL PROTEIN S17"/>
    <property type="match status" value="1"/>
</dbReference>
<dbReference type="PANTHER" id="PTHR10732:SF0">
    <property type="entry name" value="40S RIBOSOMAL PROTEIN S17"/>
    <property type="match status" value="1"/>
</dbReference>
<dbReference type="Pfam" id="PF00833">
    <property type="entry name" value="Ribosomal_S17e"/>
    <property type="match status" value="1"/>
</dbReference>
<dbReference type="SUPFAM" id="SSF116820">
    <property type="entry name" value="Rps17e-like"/>
    <property type="match status" value="1"/>
</dbReference>
<dbReference type="PROSITE" id="PS00712">
    <property type="entry name" value="RIBOSOMAL_S17E"/>
    <property type="match status" value="1"/>
</dbReference>
<comment type="subunit">
    <text evidence="2">Part of the 30S ribosomal subunit.</text>
</comment>
<comment type="similarity">
    <text evidence="1">Belongs to the eukaryotic ribosomal protein eS17 family.</text>
</comment>
<reference key="1">
    <citation type="journal article" date="1999" name="Genetics">
        <title>Divergence of the hyperthermophilic archaea Pyrococcus furiosus and P. horikoshii inferred from complete genomic sequences.</title>
        <authorList>
            <person name="Maeder D.L."/>
            <person name="Weiss R.B."/>
            <person name="Dunn D.M."/>
            <person name="Cherry J.L."/>
            <person name="Gonzalez J.M."/>
            <person name="DiRuggiero J."/>
            <person name="Robb F.T."/>
        </authorList>
    </citation>
    <scope>NUCLEOTIDE SEQUENCE [LARGE SCALE GENOMIC DNA]</scope>
    <source>
        <strain>ATCC 43587 / DSM 3638 / JCM 8422 / Vc1</strain>
    </source>
</reference>
<reference evidence="3" key="2">
    <citation type="journal article" date="2013" name="Nucleic Acids Res.">
        <title>Promiscuous behaviour of archaeal ribosomal proteins: implications for eukaryotic ribosome evolution.</title>
        <authorList>
            <person name="Armache J.P."/>
            <person name="Anger A.M."/>
            <person name="Marquez V."/>
            <person name="Franckenberg S."/>
            <person name="Frohlich T."/>
            <person name="Villa E."/>
            <person name="Berninghausen O."/>
            <person name="Thomm M."/>
            <person name="Arnold G.J."/>
            <person name="Beckmann R."/>
            <person name="Wilson D.N."/>
        </authorList>
    </citation>
    <scope>STRUCTURE BY ELECTRON MICROSCOPY (6.60 ANGSTROMS) IN THE 70S RIBOSOME</scope>
    <scope>SUBUNIT</scope>
</reference>
<evidence type="ECO:0000255" key="1">
    <source>
        <dbReference type="HAMAP-Rule" id="MF_00511"/>
    </source>
</evidence>
<evidence type="ECO:0000269" key="2">
    <source>
    </source>
</evidence>
<evidence type="ECO:0007744" key="3">
    <source>
        <dbReference type="PDB" id="4V6U"/>
    </source>
</evidence>
<protein>
    <recommendedName>
        <fullName evidence="1">Small ribosomal subunit protein eS17</fullName>
    </recommendedName>
    <alternativeName>
        <fullName>30S ribosomal protein S17e</fullName>
    </alternativeName>
</protein>
<accession>Q8U0U1</accession>
<proteinExistence type="evidence at protein level"/>
<feature type="chain" id="PRO_0000141562" description="Small ribosomal subunit protein eS17">
    <location>
        <begin position="1"/>
        <end position="67"/>
    </location>
</feature>
<name>RS17E_PYRFU</name>